<proteinExistence type="evidence at transcript level"/>
<feature type="signal peptide" evidence="1">
    <location>
        <begin position="1"/>
        <end position="24"/>
    </location>
</feature>
<feature type="chain" id="PRO_0000376907" description="Kunitz-type serine protease inhibitor kunitoxin-Tel1">
    <location>
        <begin position="25"/>
        <end position="90"/>
    </location>
</feature>
<feature type="domain" description="BPTI/Kunitz inhibitor" evidence="2">
    <location>
        <begin position="31"/>
        <end position="81"/>
    </location>
</feature>
<feature type="site" description="Reactive bond for trypsin" evidence="1">
    <location>
        <begin position="41"/>
        <end position="42"/>
    </location>
</feature>
<feature type="modified residue" description="Pyrrolidone carboxylic acid" evidence="1">
    <location>
        <position position="25"/>
    </location>
</feature>
<feature type="disulfide bond" evidence="2">
    <location>
        <begin position="31"/>
        <end position="81"/>
    </location>
</feature>
<feature type="disulfide bond" evidence="2">
    <location>
        <begin position="40"/>
        <end position="64"/>
    </location>
</feature>
<feature type="disulfide bond" evidence="2">
    <location>
        <begin position="56"/>
        <end position="77"/>
    </location>
</feature>
<reference key="1">
    <citation type="journal article" date="2008" name="Mol. Cell. Proteomics">
        <title>Evolution of an arsenal: structural and functional diversification of the venom system in the advanced snakes (Caenophidia).</title>
        <authorList>
            <person name="Fry B.G."/>
            <person name="Scheib H."/>
            <person name="van der Weerd L."/>
            <person name="Young B."/>
            <person name="McNaughtan J."/>
            <person name="Ramjan S.F.R."/>
            <person name="Vidal N."/>
            <person name="Poelmann R.E."/>
            <person name="Norman J.A."/>
        </authorList>
    </citation>
    <scope>NUCLEOTIDE SEQUENCE [MRNA]</scope>
    <source>
        <tissue>Venom gland</tissue>
    </source>
</reference>
<keyword id="KW-1015">Disulfide bond</keyword>
<keyword id="KW-0646">Protease inhibitor</keyword>
<keyword id="KW-0873">Pyrrolidone carboxylic acid</keyword>
<keyword id="KW-0964">Secreted</keyword>
<keyword id="KW-0722">Serine protease inhibitor</keyword>
<keyword id="KW-0732">Signal</keyword>
<dbReference type="EMBL" id="EU029687">
    <property type="protein sequence ID" value="ABU68487.1"/>
    <property type="molecule type" value="mRNA"/>
</dbReference>
<dbReference type="SMR" id="A7X3V4"/>
<dbReference type="MEROPS" id="I02.062"/>
<dbReference type="GO" id="GO:0005615">
    <property type="term" value="C:extracellular space"/>
    <property type="evidence" value="ECO:0007669"/>
    <property type="project" value="TreeGrafter"/>
</dbReference>
<dbReference type="GO" id="GO:0004867">
    <property type="term" value="F:serine-type endopeptidase inhibitor activity"/>
    <property type="evidence" value="ECO:0007669"/>
    <property type="project" value="UniProtKB-KW"/>
</dbReference>
<dbReference type="CDD" id="cd22608">
    <property type="entry name" value="Kunitz_PPTI-like"/>
    <property type="match status" value="1"/>
</dbReference>
<dbReference type="FunFam" id="4.10.410.10:FF:000004">
    <property type="entry name" value="Tissue factor pathway inhibitor"/>
    <property type="match status" value="1"/>
</dbReference>
<dbReference type="Gene3D" id="4.10.410.10">
    <property type="entry name" value="Pancreatic trypsin inhibitor Kunitz domain"/>
    <property type="match status" value="1"/>
</dbReference>
<dbReference type="InterPro" id="IPR002223">
    <property type="entry name" value="Kunitz_BPTI"/>
</dbReference>
<dbReference type="InterPro" id="IPR036880">
    <property type="entry name" value="Kunitz_BPTI_sf"/>
</dbReference>
<dbReference type="InterPro" id="IPR020901">
    <property type="entry name" value="Prtase_inh_Kunz-CS"/>
</dbReference>
<dbReference type="InterPro" id="IPR050098">
    <property type="entry name" value="TFPI/VKTCI-like"/>
</dbReference>
<dbReference type="PANTHER" id="PTHR10083:SF374">
    <property type="entry name" value="BPTI_KUNITZ INHIBITOR DOMAIN-CONTAINING PROTEIN"/>
    <property type="match status" value="1"/>
</dbReference>
<dbReference type="PANTHER" id="PTHR10083">
    <property type="entry name" value="KUNITZ-TYPE PROTEASE INHIBITOR-RELATED"/>
    <property type="match status" value="1"/>
</dbReference>
<dbReference type="Pfam" id="PF00014">
    <property type="entry name" value="Kunitz_BPTI"/>
    <property type="match status" value="1"/>
</dbReference>
<dbReference type="PRINTS" id="PR00759">
    <property type="entry name" value="BASICPTASE"/>
</dbReference>
<dbReference type="SMART" id="SM00131">
    <property type="entry name" value="KU"/>
    <property type="match status" value="1"/>
</dbReference>
<dbReference type="SUPFAM" id="SSF57362">
    <property type="entry name" value="BPTI-like"/>
    <property type="match status" value="1"/>
</dbReference>
<dbReference type="PROSITE" id="PS00280">
    <property type="entry name" value="BPTI_KUNITZ_1"/>
    <property type="match status" value="1"/>
</dbReference>
<dbReference type="PROSITE" id="PS50279">
    <property type="entry name" value="BPTI_KUNITZ_2"/>
    <property type="match status" value="1"/>
</dbReference>
<name>VKT1_TELDH</name>
<sequence length="90" mass="10229">MSSGGLLLLLGLLTLWAELTPVSGQDRPKYCDLPADSGPCRARKRHFYYNSRSNQCEEFTYGGCRGNENNFETKDKCHYTCVAPPRRRPL</sequence>
<evidence type="ECO:0000250" key="1"/>
<evidence type="ECO:0000255" key="2">
    <source>
        <dbReference type="PROSITE-ProRule" id="PRU00031"/>
    </source>
</evidence>
<evidence type="ECO:0000305" key="3"/>
<comment type="function">
    <text evidence="1">Serine protease inhibitor.</text>
</comment>
<comment type="subcellular location">
    <subcellularLocation>
        <location evidence="1">Secreted</location>
    </subcellularLocation>
</comment>
<comment type="tissue specificity">
    <text>Expressed by the venom gland.</text>
</comment>
<comment type="similarity">
    <text evidence="3">Belongs to the venom Kunitz-type family.</text>
</comment>
<organism>
    <name type="scientific">Telescopus dhara</name>
    <name type="common">Egyptian catsnake</name>
    <dbReference type="NCBI Taxonomy" id="338837"/>
    <lineage>
        <taxon>Eukaryota</taxon>
        <taxon>Metazoa</taxon>
        <taxon>Chordata</taxon>
        <taxon>Craniata</taxon>
        <taxon>Vertebrata</taxon>
        <taxon>Euteleostomi</taxon>
        <taxon>Lepidosauria</taxon>
        <taxon>Squamata</taxon>
        <taxon>Bifurcata</taxon>
        <taxon>Unidentata</taxon>
        <taxon>Episquamata</taxon>
        <taxon>Toxicofera</taxon>
        <taxon>Serpentes</taxon>
        <taxon>Colubroidea</taxon>
        <taxon>Colubridae</taxon>
        <taxon>Colubrinae</taxon>
        <taxon>Telescopus</taxon>
    </lineage>
</organism>
<accession>A7X3V4</accession>
<protein>
    <recommendedName>
        <fullName>Kunitz-type serine protease inhibitor kunitoxin-Tel1</fullName>
    </recommendedName>
</protein>